<dbReference type="EMBL" id="U00096">
    <property type="protein sequence ID" value="AYC08162.1"/>
    <property type="molecule type" value="Genomic_DNA"/>
</dbReference>
<dbReference type="EMBL" id="AP009048">
    <property type="protein sequence ID" value="BAB96624.2"/>
    <property type="molecule type" value="Genomic_DNA"/>
</dbReference>
<dbReference type="PIR" id="H64726">
    <property type="entry name" value="H64726"/>
</dbReference>
<dbReference type="BioGRID" id="4261615">
    <property type="interactions" value="6"/>
</dbReference>
<dbReference type="FunCoup" id="P39220">
    <property type="interactions" value="66"/>
</dbReference>
<dbReference type="IntAct" id="P39220">
    <property type="interactions" value="4"/>
</dbReference>
<dbReference type="EnsemblBacteria" id="AYC08162">
    <property type="protein sequence ID" value="AYC08162"/>
    <property type="gene ID" value="b0056"/>
</dbReference>
<dbReference type="KEGG" id="ecj:JW0055"/>
<dbReference type="EchoBASE" id="EB2494"/>
<dbReference type="eggNOG" id="COG1357">
    <property type="taxonomic scope" value="Bacteria"/>
</dbReference>
<dbReference type="HOGENOM" id="CLU_091636_0_0_6"/>
<dbReference type="InParanoid" id="P39220"/>
<dbReference type="BioCyc" id="EcoCyc:EG12610-MONOMER"/>
<dbReference type="PRO" id="PR:P39220"/>
<dbReference type="Proteomes" id="UP000000625">
    <property type="component" value="Chromosome"/>
</dbReference>
<feature type="chain" id="PRO_0000168523" description="Protein YabP">
    <location>
        <begin position="1"/>
        <end position="216"/>
    </location>
</feature>
<comment type="miscellaneous">
    <text evidence="1">May be missing up to 80 C-terminal residues compared to orthologs.</text>
</comment>
<proteinExistence type="predicted"/>
<keyword id="KW-1185">Reference proteome</keyword>
<evidence type="ECO:0000305" key="1"/>
<name>YABP_ECOLI</name>
<sequence>MKVSVPGMPVTLLNMSKNDIYKMVSGDKMDVKMNIFQRLWETLRHLFWSDKQTEAYKLLFNFVNNQTGNINASEYFTGAINENEREKFINSLELFNKLKTCAKNPDELVAKGNMRWVAQTFGDIELSVTFFIEKNKICTQTLQLHKGQGNLGVDLRKAYLPGVDMRDCYLGKKTMKGSNDILYERPGWNANLGVLPRTVLPRTVLTRTVLTWTVLP</sequence>
<protein>
    <recommendedName>
        <fullName>Protein YabP</fullName>
    </recommendedName>
</protein>
<reference key="1">
    <citation type="journal article" date="1992" name="Nucleic Acids Res.">
        <title>Systematic sequencing of the Escherichia coli genome: analysis of the 0-2.4 min region.</title>
        <authorList>
            <person name="Yura T."/>
            <person name="Mori H."/>
            <person name="Nagai H."/>
            <person name="Nagata T."/>
            <person name="Ishihama A."/>
            <person name="Fujita N."/>
            <person name="Isono K."/>
            <person name="Mizobuchi K."/>
            <person name="Nakata A."/>
        </authorList>
    </citation>
    <scope>NUCLEOTIDE SEQUENCE [LARGE SCALE GENOMIC DNA]</scope>
    <source>
        <strain>K12</strain>
    </source>
</reference>
<reference key="2">
    <citation type="journal article" date="1997" name="Science">
        <title>The complete genome sequence of Escherichia coli K-12.</title>
        <authorList>
            <person name="Blattner F.R."/>
            <person name="Plunkett G. III"/>
            <person name="Bloch C.A."/>
            <person name="Perna N.T."/>
            <person name="Burland V."/>
            <person name="Riley M."/>
            <person name="Collado-Vides J."/>
            <person name="Glasner J.D."/>
            <person name="Rode C.K."/>
            <person name="Mayhew G.F."/>
            <person name="Gregor J."/>
            <person name="Davis N.W."/>
            <person name="Kirkpatrick H.A."/>
            <person name="Goeden M.A."/>
            <person name="Rose D.J."/>
            <person name="Mau B."/>
            <person name="Shao Y."/>
        </authorList>
    </citation>
    <scope>NUCLEOTIDE SEQUENCE [LARGE SCALE GENOMIC DNA]</scope>
    <source>
        <strain>K12 / MG1655 / ATCC 47076</strain>
    </source>
</reference>
<reference key="3">
    <citation type="journal article" date="2006" name="Mol. Syst. Biol.">
        <title>Highly accurate genome sequences of Escherichia coli K-12 strains MG1655 and W3110.</title>
        <authorList>
            <person name="Hayashi K."/>
            <person name="Morooka N."/>
            <person name="Yamamoto Y."/>
            <person name="Fujita K."/>
            <person name="Isono K."/>
            <person name="Choi S."/>
            <person name="Ohtsubo E."/>
            <person name="Baba T."/>
            <person name="Wanner B.L."/>
            <person name="Mori H."/>
            <person name="Horiuchi T."/>
        </authorList>
    </citation>
    <scope>NUCLEOTIDE SEQUENCE [LARGE SCALE GENOMIC DNA]</scope>
    <source>
        <strain>K12 / W3110 / ATCC 27325 / DSM 5911</strain>
    </source>
</reference>
<reference key="4">
    <citation type="unpublished observations" date="1994-11">
        <authorList>
            <person name="Rudd K.E."/>
        </authorList>
    </citation>
    <scope>IDENTIFICATION</scope>
</reference>
<accession>P39220</accession>
<accession>A0A385XMP4</accession>
<accession>P75632</accession>
<accession>Q8KJP8</accession>
<organism>
    <name type="scientific">Escherichia coli (strain K12)</name>
    <dbReference type="NCBI Taxonomy" id="83333"/>
    <lineage>
        <taxon>Bacteria</taxon>
        <taxon>Pseudomonadati</taxon>
        <taxon>Pseudomonadota</taxon>
        <taxon>Gammaproteobacteria</taxon>
        <taxon>Enterobacterales</taxon>
        <taxon>Enterobacteriaceae</taxon>
        <taxon>Escherichia</taxon>
    </lineage>
</organism>
<gene>
    <name type="primary">yabP</name>
    <name type="ordered locus">b0056</name>
    <name type="ordered locus">JW0055</name>
    <name type="ORF">b4659</name>
</gene>